<organism>
    <name type="scientific">Pseudomonas aeruginosa (strain LESB58)</name>
    <dbReference type="NCBI Taxonomy" id="557722"/>
    <lineage>
        <taxon>Bacteria</taxon>
        <taxon>Pseudomonadati</taxon>
        <taxon>Pseudomonadota</taxon>
        <taxon>Gammaproteobacteria</taxon>
        <taxon>Pseudomonadales</taxon>
        <taxon>Pseudomonadaceae</taxon>
        <taxon>Pseudomonas</taxon>
    </lineage>
</organism>
<feature type="chain" id="PRO_1000188934" description="Urease subunit beta">
    <location>
        <begin position="1"/>
        <end position="101"/>
    </location>
</feature>
<protein>
    <recommendedName>
        <fullName evidence="1">Urease subunit beta</fullName>
        <ecNumber evidence="1">3.5.1.5</ecNumber>
    </recommendedName>
    <alternativeName>
        <fullName evidence="1">Urea amidohydrolase subunit beta</fullName>
    </alternativeName>
</protein>
<gene>
    <name evidence="1" type="primary">ureB</name>
    <name type="ordered locus">PLES_52531</name>
</gene>
<dbReference type="EC" id="3.5.1.5" evidence="1"/>
<dbReference type="EMBL" id="FM209186">
    <property type="protein sequence ID" value="CAW30007.1"/>
    <property type="molecule type" value="Genomic_DNA"/>
</dbReference>
<dbReference type="RefSeq" id="WP_003095450.1">
    <property type="nucleotide sequence ID" value="NC_011770.1"/>
</dbReference>
<dbReference type="SMR" id="B7V1T0"/>
<dbReference type="KEGG" id="pag:PLES_52531"/>
<dbReference type="HOGENOM" id="CLU_129707_1_1_6"/>
<dbReference type="UniPathway" id="UPA00258">
    <property type="reaction ID" value="UER00370"/>
</dbReference>
<dbReference type="GO" id="GO:0035550">
    <property type="term" value="C:urease complex"/>
    <property type="evidence" value="ECO:0007669"/>
    <property type="project" value="InterPro"/>
</dbReference>
<dbReference type="GO" id="GO:0009039">
    <property type="term" value="F:urease activity"/>
    <property type="evidence" value="ECO:0007669"/>
    <property type="project" value="UniProtKB-UniRule"/>
</dbReference>
<dbReference type="GO" id="GO:0043419">
    <property type="term" value="P:urea catabolic process"/>
    <property type="evidence" value="ECO:0007669"/>
    <property type="project" value="UniProtKB-UniRule"/>
</dbReference>
<dbReference type="CDD" id="cd00407">
    <property type="entry name" value="Urease_beta"/>
    <property type="match status" value="1"/>
</dbReference>
<dbReference type="FunFam" id="2.10.150.10:FF:000001">
    <property type="entry name" value="Urease subunit beta"/>
    <property type="match status" value="1"/>
</dbReference>
<dbReference type="Gene3D" id="2.10.150.10">
    <property type="entry name" value="Urease, beta subunit"/>
    <property type="match status" value="1"/>
</dbReference>
<dbReference type="HAMAP" id="MF_01954">
    <property type="entry name" value="Urease_beta"/>
    <property type="match status" value="1"/>
</dbReference>
<dbReference type="InterPro" id="IPR002019">
    <property type="entry name" value="Urease_beta-like"/>
</dbReference>
<dbReference type="InterPro" id="IPR036461">
    <property type="entry name" value="Urease_betasu_sf"/>
</dbReference>
<dbReference type="InterPro" id="IPR050069">
    <property type="entry name" value="Urease_subunit"/>
</dbReference>
<dbReference type="NCBIfam" id="NF009682">
    <property type="entry name" value="PRK13203.1"/>
    <property type="match status" value="1"/>
</dbReference>
<dbReference type="NCBIfam" id="TIGR00192">
    <property type="entry name" value="urease_beta"/>
    <property type="match status" value="1"/>
</dbReference>
<dbReference type="PANTHER" id="PTHR33569">
    <property type="entry name" value="UREASE"/>
    <property type="match status" value="1"/>
</dbReference>
<dbReference type="PANTHER" id="PTHR33569:SF1">
    <property type="entry name" value="UREASE"/>
    <property type="match status" value="1"/>
</dbReference>
<dbReference type="Pfam" id="PF00699">
    <property type="entry name" value="Urease_beta"/>
    <property type="match status" value="1"/>
</dbReference>
<dbReference type="SUPFAM" id="SSF51278">
    <property type="entry name" value="Urease, beta-subunit"/>
    <property type="match status" value="1"/>
</dbReference>
<name>URE2_PSEA8</name>
<keyword id="KW-0963">Cytoplasm</keyword>
<keyword id="KW-0378">Hydrolase</keyword>
<sequence length="101" mass="10989">MIPGEYDIQPGDIELNAGRRTLALSVANTGDRPIQVGSHYHFFEVNDALAFDRPATRGMRLNIAAGTAVRFEPGQSREVELVEIGGGRRVYGFAGRVMGDL</sequence>
<reference key="1">
    <citation type="journal article" date="2009" name="Genome Res.">
        <title>Newly introduced genomic prophage islands are critical determinants of in vivo competitiveness in the Liverpool epidemic strain of Pseudomonas aeruginosa.</title>
        <authorList>
            <person name="Winstanley C."/>
            <person name="Langille M.G.I."/>
            <person name="Fothergill J.L."/>
            <person name="Kukavica-Ibrulj I."/>
            <person name="Paradis-Bleau C."/>
            <person name="Sanschagrin F."/>
            <person name="Thomson N.R."/>
            <person name="Winsor G.L."/>
            <person name="Quail M.A."/>
            <person name="Lennard N."/>
            <person name="Bignell A."/>
            <person name="Clarke L."/>
            <person name="Seeger K."/>
            <person name="Saunders D."/>
            <person name="Harris D."/>
            <person name="Parkhill J."/>
            <person name="Hancock R.E.W."/>
            <person name="Brinkman F.S.L."/>
            <person name="Levesque R.C."/>
        </authorList>
    </citation>
    <scope>NUCLEOTIDE SEQUENCE [LARGE SCALE GENOMIC DNA]</scope>
    <source>
        <strain>LESB58</strain>
    </source>
</reference>
<proteinExistence type="inferred from homology"/>
<accession>B7V1T0</accession>
<comment type="catalytic activity">
    <reaction evidence="1">
        <text>urea + 2 H2O + H(+) = hydrogencarbonate + 2 NH4(+)</text>
        <dbReference type="Rhea" id="RHEA:20557"/>
        <dbReference type="ChEBI" id="CHEBI:15377"/>
        <dbReference type="ChEBI" id="CHEBI:15378"/>
        <dbReference type="ChEBI" id="CHEBI:16199"/>
        <dbReference type="ChEBI" id="CHEBI:17544"/>
        <dbReference type="ChEBI" id="CHEBI:28938"/>
        <dbReference type="EC" id="3.5.1.5"/>
    </reaction>
</comment>
<comment type="pathway">
    <text evidence="1">Nitrogen metabolism; urea degradation; CO(2) and NH(3) from urea (urease route): step 1/1.</text>
</comment>
<comment type="subunit">
    <text evidence="1">Heterotrimer of UreA (gamma), UreB (beta) and UreC (alpha) subunits. Three heterotrimers associate to form the active enzyme.</text>
</comment>
<comment type="subcellular location">
    <subcellularLocation>
        <location evidence="1">Cytoplasm</location>
    </subcellularLocation>
</comment>
<comment type="similarity">
    <text evidence="1">Belongs to the urease beta subunit family.</text>
</comment>
<evidence type="ECO:0000255" key="1">
    <source>
        <dbReference type="HAMAP-Rule" id="MF_01954"/>
    </source>
</evidence>